<evidence type="ECO:0000255" key="1"/>
<evidence type="ECO:0000305" key="2"/>
<reference key="1">
    <citation type="journal article" date="1998" name="Microbiology">
        <title>The 172 kb prkA-addAB region from 83 degrees to 97 degrees of the Bacillus subtilis chromosome contains several dysfunctional genes, the glyB marker, many genes encoding transporter proteins, and the ubiquitous hit gene.</title>
        <authorList>
            <person name="Noback M.A."/>
            <person name="Holsappel S."/>
            <person name="Kiewiet R."/>
            <person name="Terpstra P."/>
            <person name="Wambutt R."/>
            <person name="Wedler H."/>
            <person name="Venema G."/>
            <person name="Bron S."/>
        </authorList>
    </citation>
    <scope>NUCLEOTIDE SEQUENCE [GENOMIC DNA]</scope>
    <source>
        <strain>168</strain>
    </source>
</reference>
<reference key="2">
    <citation type="journal article" date="1997" name="Nature">
        <title>The complete genome sequence of the Gram-positive bacterium Bacillus subtilis.</title>
        <authorList>
            <person name="Kunst F."/>
            <person name="Ogasawara N."/>
            <person name="Moszer I."/>
            <person name="Albertini A.M."/>
            <person name="Alloni G."/>
            <person name="Azevedo V."/>
            <person name="Bertero M.G."/>
            <person name="Bessieres P."/>
            <person name="Bolotin A."/>
            <person name="Borchert S."/>
            <person name="Borriss R."/>
            <person name="Boursier L."/>
            <person name="Brans A."/>
            <person name="Braun M."/>
            <person name="Brignell S.C."/>
            <person name="Bron S."/>
            <person name="Brouillet S."/>
            <person name="Bruschi C.V."/>
            <person name="Caldwell B."/>
            <person name="Capuano V."/>
            <person name="Carter N.M."/>
            <person name="Choi S.-K."/>
            <person name="Codani J.-J."/>
            <person name="Connerton I.F."/>
            <person name="Cummings N.J."/>
            <person name="Daniel R.A."/>
            <person name="Denizot F."/>
            <person name="Devine K.M."/>
            <person name="Duesterhoeft A."/>
            <person name="Ehrlich S.D."/>
            <person name="Emmerson P.T."/>
            <person name="Entian K.-D."/>
            <person name="Errington J."/>
            <person name="Fabret C."/>
            <person name="Ferrari E."/>
            <person name="Foulger D."/>
            <person name="Fritz C."/>
            <person name="Fujita M."/>
            <person name="Fujita Y."/>
            <person name="Fuma S."/>
            <person name="Galizzi A."/>
            <person name="Galleron N."/>
            <person name="Ghim S.-Y."/>
            <person name="Glaser P."/>
            <person name="Goffeau A."/>
            <person name="Golightly E.J."/>
            <person name="Grandi G."/>
            <person name="Guiseppi G."/>
            <person name="Guy B.J."/>
            <person name="Haga K."/>
            <person name="Haiech J."/>
            <person name="Harwood C.R."/>
            <person name="Henaut A."/>
            <person name="Hilbert H."/>
            <person name="Holsappel S."/>
            <person name="Hosono S."/>
            <person name="Hullo M.-F."/>
            <person name="Itaya M."/>
            <person name="Jones L.-M."/>
            <person name="Joris B."/>
            <person name="Karamata D."/>
            <person name="Kasahara Y."/>
            <person name="Klaerr-Blanchard M."/>
            <person name="Klein C."/>
            <person name="Kobayashi Y."/>
            <person name="Koetter P."/>
            <person name="Koningstein G."/>
            <person name="Krogh S."/>
            <person name="Kumano M."/>
            <person name="Kurita K."/>
            <person name="Lapidus A."/>
            <person name="Lardinois S."/>
            <person name="Lauber J."/>
            <person name="Lazarevic V."/>
            <person name="Lee S.-M."/>
            <person name="Levine A."/>
            <person name="Liu H."/>
            <person name="Masuda S."/>
            <person name="Mauel C."/>
            <person name="Medigue C."/>
            <person name="Medina N."/>
            <person name="Mellado R.P."/>
            <person name="Mizuno M."/>
            <person name="Moestl D."/>
            <person name="Nakai S."/>
            <person name="Noback M."/>
            <person name="Noone D."/>
            <person name="O'Reilly M."/>
            <person name="Ogawa K."/>
            <person name="Ogiwara A."/>
            <person name="Oudega B."/>
            <person name="Park S.-H."/>
            <person name="Parro V."/>
            <person name="Pohl T.M."/>
            <person name="Portetelle D."/>
            <person name="Porwollik S."/>
            <person name="Prescott A.M."/>
            <person name="Presecan E."/>
            <person name="Pujic P."/>
            <person name="Purnelle B."/>
            <person name="Rapoport G."/>
            <person name="Rey M."/>
            <person name="Reynolds S."/>
            <person name="Rieger M."/>
            <person name="Rivolta C."/>
            <person name="Rocha E."/>
            <person name="Roche B."/>
            <person name="Rose M."/>
            <person name="Sadaie Y."/>
            <person name="Sato T."/>
            <person name="Scanlan E."/>
            <person name="Schleich S."/>
            <person name="Schroeter R."/>
            <person name="Scoffone F."/>
            <person name="Sekiguchi J."/>
            <person name="Sekowska A."/>
            <person name="Seror S.J."/>
            <person name="Serror P."/>
            <person name="Shin B.-S."/>
            <person name="Soldo B."/>
            <person name="Sorokin A."/>
            <person name="Tacconi E."/>
            <person name="Takagi T."/>
            <person name="Takahashi H."/>
            <person name="Takemaru K."/>
            <person name="Takeuchi M."/>
            <person name="Tamakoshi A."/>
            <person name="Tanaka T."/>
            <person name="Terpstra P."/>
            <person name="Tognoni A."/>
            <person name="Tosato V."/>
            <person name="Uchiyama S."/>
            <person name="Vandenbol M."/>
            <person name="Vannier F."/>
            <person name="Vassarotti A."/>
            <person name="Viari A."/>
            <person name="Wambutt R."/>
            <person name="Wedler E."/>
            <person name="Wedler H."/>
            <person name="Weitzenegger T."/>
            <person name="Winters P."/>
            <person name="Wipat A."/>
            <person name="Yamamoto H."/>
            <person name="Yamane K."/>
            <person name="Yasumoto K."/>
            <person name="Yata K."/>
            <person name="Yoshida K."/>
            <person name="Yoshikawa H.-F."/>
            <person name="Zumstein E."/>
            <person name="Yoshikawa H."/>
            <person name="Danchin A."/>
        </authorList>
    </citation>
    <scope>NUCLEOTIDE SEQUENCE [LARGE SCALE GENOMIC DNA]</scope>
    <source>
        <strain>168</strain>
    </source>
</reference>
<dbReference type="EMBL" id="Y14081">
    <property type="protein sequence ID" value="CAA74465.1"/>
    <property type="molecule type" value="Genomic_DNA"/>
</dbReference>
<dbReference type="EMBL" id="AL009126">
    <property type="protein sequence ID" value="CAB12886.1"/>
    <property type="molecule type" value="Genomic_DNA"/>
</dbReference>
<dbReference type="PIR" id="C69833">
    <property type="entry name" value="C69833"/>
</dbReference>
<dbReference type="RefSeq" id="NP_388927.1">
    <property type="nucleotide sequence ID" value="NC_000964.3"/>
</dbReference>
<dbReference type="RefSeq" id="WP_003224377.1">
    <property type="nucleotide sequence ID" value="NZ_OZ025638.1"/>
</dbReference>
<dbReference type="SMR" id="O07557"/>
<dbReference type="FunCoup" id="O07557">
    <property type="interactions" value="16"/>
</dbReference>
<dbReference type="STRING" id="224308.BSU10460"/>
<dbReference type="PaxDb" id="224308-BSU10460"/>
<dbReference type="EnsemblBacteria" id="CAB12886">
    <property type="protein sequence ID" value="CAB12886"/>
    <property type="gene ID" value="BSU_10460"/>
</dbReference>
<dbReference type="GeneID" id="939777"/>
<dbReference type="KEGG" id="bsu:BSU10460"/>
<dbReference type="PATRIC" id="fig|224308.179.peg.1125"/>
<dbReference type="eggNOG" id="ENOG50339IS">
    <property type="taxonomic scope" value="Bacteria"/>
</dbReference>
<dbReference type="InParanoid" id="O07557"/>
<dbReference type="OrthoDB" id="3628949at2"/>
<dbReference type="BioCyc" id="BSUB:BSU10460-MONOMER"/>
<dbReference type="Proteomes" id="UP000001570">
    <property type="component" value="Chromosome"/>
</dbReference>
<dbReference type="GO" id="GO:0005886">
    <property type="term" value="C:plasma membrane"/>
    <property type="evidence" value="ECO:0007669"/>
    <property type="project" value="UniProtKB-SubCell"/>
</dbReference>
<dbReference type="InterPro" id="IPR021741">
    <property type="entry name" value="DUF3311"/>
</dbReference>
<dbReference type="PANTHER" id="PTHR40034">
    <property type="entry name" value="BSL5891 PROTEIN"/>
    <property type="match status" value="1"/>
</dbReference>
<dbReference type="PANTHER" id="PTHR40034:SF1">
    <property type="entry name" value="BSL5891 PROTEIN"/>
    <property type="match status" value="1"/>
</dbReference>
<dbReference type="Pfam" id="PF11755">
    <property type="entry name" value="DUF3311"/>
    <property type="match status" value="1"/>
</dbReference>
<feature type="chain" id="PRO_0000375818" description="Uncharacterized membrane protein YhjC">
    <location>
        <begin position="1"/>
        <end position="66"/>
    </location>
</feature>
<feature type="transmembrane region" description="Helical" evidence="1">
    <location>
        <begin position="3"/>
        <end position="23"/>
    </location>
</feature>
<feature type="transmembrane region" description="Helical" evidence="1">
    <location>
        <begin position="34"/>
        <end position="54"/>
    </location>
</feature>
<keyword id="KW-1003">Cell membrane</keyword>
<keyword id="KW-0472">Membrane</keyword>
<keyword id="KW-1185">Reference proteome</keyword>
<keyword id="KW-0812">Transmembrane</keyword>
<keyword id="KW-1133">Transmembrane helix</keyword>
<name>YHJC_BACSU</name>
<organism>
    <name type="scientific">Bacillus subtilis (strain 168)</name>
    <dbReference type="NCBI Taxonomy" id="224308"/>
    <lineage>
        <taxon>Bacteria</taxon>
        <taxon>Bacillati</taxon>
        <taxon>Bacillota</taxon>
        <taxon>Bacilli</taxon>
        <taxon>Bacillales</taxon>
        <taxon>Bacillaceae</taxon>
        <taxon>Bacillus</taxon>
    </lineage>
</organism>
<sequence>MKLIHVLAALPFIGILLGIPFANKVTPYVFGMPFILAYIVMWALLTSALMAIVYVLDKENKKEEAE</sequence>
<gene>
    <name type="primary">yhjC</name>
    <name type="ordered locus">BSU10460</name>
</gene>
<accession>O07557</accession>
<accession>Q796S9</accession>
<proteinExistence type="predicted"/>
<comment type="subcellular location">
    <subcellularLocation>
        <location evidence="2">Cell membrane</location>
        <topology evidence="2">Multi-pass membrane protein</topology>
    </subcellularLocation>
</comment>
<protein>
    <recommendedName>
        <fullName>Uncharacterized membrane protein YhjC</fullName>
    </recommendedName>
</protein>